<geneLocation type="chloroplast"/>
<protein>
    <recommendedName>
        <fullName>Uncharacterized 3.3 kDa protein in rpl11-trnW intergenic region</fullName>
    </recommendedName>
    <alternativeName>
        <fullName>ORF27</fullName>
    </alternativeName>
</protein>
<name>YCXA_TRICV</name>
<dbReference type="EMBL" id="Z67753">
    <property type="protein sequence ID" value="CAA91728.1"/>
    <property type="molecule type" value="Genomic_DNA"/>
</dbReference>
<dbReference type="PIR" id="S78355">
    <property type="entry name" value="S78355"/>
</dbReference>
<dbReference type="RefSeq" id="NP_043696.1">
    <property type="nucleotide sequence ID" value="NC_001713.1"/>
</dbReference>
<dbReference type="GeneID" id="1457272"/>
<dbReference type="GO" id="GO:0009507">
    <property type="term" value="C:chloroplast"/>
    <property type="evidence" value="ECO:0007669"/>
    <property type="project" value="UniProtKB-SubCell"/>
</dbReference>
<organism>
    <name type="scientific">Trieres chinensis</name>
    <name type="common">Marine centric diatom</name>
    <name type="synonym">Odontella sinensis</name>
    <dbReference type="NCBI Taxonomy" id="1514140"/>
    <lineage>
        <taxon>Eukaryota</taxon>
        <taxon>Sar</taxon>
        <taxon>Stramenopiles</taxon>
        <taxon>Ochrophyta</taxon>
        <taxon>Bacillariophyta</taxon>
        <taxon>Mediophyceae</taxon>
        <taxon>Biddulphiophycidae</taxon>
        <taxon>Eupodiscales</taxon>
        <taxon>Parodontellaceae</taxon>
        <taxon>Trieres</taxon>
    </lineage>
</organism>
<proteinExistence type="predicted"/>
<sequence length="27" mass="3297">MKIFLYLLRKKIAEVWIFQNPANFLSL</sequence>
<feature type="chain" id="PRO_0000217462" description="Uncharacterized 3.3 kDa protein in rpl11-trnW intergenic region">
    <location>
        <begin position="1"/>
        <end position="27"/>
    </location>
</feature>
<accession>P49836</accession>
<comment type="subcellular location">
    <subcellularLocation>
        <location>Plastid</location>
        <location>Chloroplast</location>
    </subcellularLocation>
</comment>
<reference key="1">
    <citation type="journal article" date="1995" name="Plant Mol. Biol. Rep.">
        <title>The chloroplast genome of a chlorophyll a+c-containing alga, Odontella sinensis.</title>
        <authorList>
            <person name="Kowallik K.V."/>
            <person name="Stoebe B."/>
            <person name="Schaffran I."/>
            <person name="Kroth-Pancic P."/>
            <person name="Freier U."/>
        </authorList>
    </citation>
    <scope>NUCLEOTIDE SEQUENCE [LARGE SCALE GENOMIC DNA]</scope>
</reference>
<keyword id="KW-0150">Chloroplast</keyword>
<keyword id="KW-0934">Plastid</keyword>